<organism>
    <name type="scientific">Staphylococcus aureus (strain COL)</name>
    <dbReference type="NCBI Taxonomy" id="93062"/>
    <lineage>
        <taxon>Bacteria</taxon>
        <taxon>Bacillati</taxon>
        <taxon>Bacillota</taxon>
        <taxon>Bacilli</taxon>
        <taxon>Bacillales</taxon>
        <taxon>Staphylococcaceae</taxon>
        <taxon>Staphylococcus</taxon>
    </lineage>
</organism>
<accession>Q5HEA7</accession>
<reference key="1">
    <citation type="journal article" date="2005" name="J. Bacteriol.">
        <title>Insights on evolution of virulence and resistance from the complete genome analysis of an early methicillin-resistant Staphylococcus aureus strain and a biofilm-producing methicillin-resistant Staphylococcus epidermidis strain.</title>
        <authorList>
            <person name="Gill S.R."/>
            <person name="Fouts D.E."/>
            <person name="Archer G.L."/>
            <person name="Mongodin E.F."/>
            <person name="DeBoy R.T."/>
            <person name="Ravel J."/>
            <person name="Paulsen I.T."/>
            <person name="Kolonay J.F."/>
            <person name="Brinkac L.M."/>
            <person name="Beanan M.J."/>
            <person name="Dodson R.J."/>
            <person name="Daugherty S.C."/>
            <person name="Madupu R."/>
            <person name="Angiuoli S.V."/>
            <person name="Durkin A.S."/>
            <person name="Haft D.H."/>
            <person name="Vamathevan J.J."/>
            <person name="Khouri H."/>
            <person name="Utterback T.R."/>
            <person name="Lee C."/>
            <person name="Dimitrov G."/>
            <person name="Jiang L."/>
            <person name="Qin H."/>
            <person name="Weidman J."/>
            <person name="Tran K."/>
            <person name="Kang K.H."/>
            <person name="Hance I.R."/>
            <person name="Nelson K.E."/>
            <person name="Fraser C.M."/>
        </authorList>
    </citation>
    <scope>NUCLEOTIDE SEQUENCE [LARGE SCALE GENOMIC DNA]</scope>
    <source>
        <strain>COL</strain>
    </source>
</reference>
<sequence length="263" mass="28090">MNYLNKIRIENPLTICYTNDVVKNFTANGLLSIGASPAMSEAPEEAEEFYKVAQALLINIGTLTAENEQDIIAIAQTANEAGLPIVFDPVAVGASTYRKQFCKLLLKSAKVSVIKGNASEILALIDDTATMKGTDSDANLDAVAIAKKAYATYKTAIVITGKEDVIVQDNKAFVLANGSPLLARVTGAGCLLGGVIAGFLFRETEPDIEALIEAVSVFNIAAEVAAENENCGGPGTFSPLLLDTLYHLNETTYQQRIRIQEVE</sequence>
<protein>
    <recommendedName>
        <fullName evidence="1">Hydroxyethylthiazole kinase</fullName>
        <ecNumber evidence="1">2.7.1.50</ecNumber>
    </recommendedName>
    <alternativeName>
        <fullName evidence="1">4-methyl-5-beta-hydroxyethylthiazole kinase</fullName>
        <shortName evidence="1">TH kinase</shortName>
        <shortName evidence="1">Thz kinase</shortName>
    </alternativeName>
</protein>
<keyword id="KW-0067">ATP-binding</keyword>
<keyword id="KW-0418">Kinase</keyword>
<keyword id="KW-0460">Magnesium</keyword>
<keyword id="KW-0479">Metal-binding</keyword>
<keyword id="KW-0547">Nucleotide-binding</keyword>
<keyword id="KW-0784">Thiamine biosynthesis</keyword>
<keyword id="KW-0808">Transferase</keyword>
<name>THIM_STAAC</name>
<dbReference type="EC" id="2.7.1.50" evidence="1"/>
<dbReference type="EMBL" id="CP000046">
    <property type="protein sequence ID" value="AAW37046.1"/>
    <property type="molecule type" value="Genomic_DNA"/>
</dbReference>
<dbReference type="RefSeq" id="WP_001108479.1">
    <property type="nucleotide sequence ID" value="NZ_JBGOFO010000007.1"/>
</dbReference>
<dbReference type="SMR" id="Q5HEA7"/>
<dbReference type="KEGG" id="sac:SACOL2084"/>
<dbReference type="HOGENOM" id="CLU_019943_0_2_9"/>
<dbReference type="UniPathway" id="UPA00060">
    <property type="reaction ID" value="UER00139"/>
</dbReference>
<dbReference type="Proteomes" id="UP000000530">
    <property type="component" value="Chromosome"/>
</dbReference>
<dbReference type="GO" id="GO:0005524">
    <property type="term" value="F:ATP binding"/>
    <property type="evidence" value="ECO:0007669"/>
    <property type="project" value="UniProtKB-UniRule"/>
</dbReference>
<dbReference type="GO" id="GO:0004417">
    <property type="term" value="F:hydroxyethylthiazole kinase activity"/>
    <property type="evidence" value="ECO:0007669"/>
    <property type="project" value="UniProtKB-UniRule"/>
</dbReference>
<dbReference type="GO" id="GO:0000287">
    <property type="term" value="F:magnesium ion binding"/>
    <property type="evidence" value="ECO:0007669"/>
    <property type="project" value="UniProtKB-UniRule"/>
</dbReference>
<dbReference type="GO" id="GO:0009228">
    <property type="term" value="P:thiamine biosynthetic process"/>
    <property type="evidence" value="ECO:0007669"/>
    <property type="project" value="UniProtKB-KW"/>
</dbReference>
<dbReference type="GO" id="GO:0009229">
    <property type="term" value="P:thiamine diphosphate biosynthetic process"/>
    <property type="evidence" value="ECO:0007669"/>
    <property type="project" value="UniProtKB-UniRule"/>
</dbReference>
<dbReference type="CDD" id="cd01170">
    <property type="entry name" value="THZ_kinase"/>
    <property type="match status" value="1"/>
</dbReference>
<dbReference type="Gene3D" id="3.40.1190.20">
    <property type="match status" value="1"/>
</dbReference>
<dbReference type="HAMAP" id="MF_00228">
    <property type="entry name" value="Thz_kinase"/>
    <property type="match status" value="1"/>
</dbReference>
<dbReference type="InterPro" id="IPR000417">
    <property type="entry name" value="Hyethyz_kinase"/>
</dbReference>
<dbReference type="InterPro" id="IPR029056">
    <property type="entry name" value="Ribokinase-like"/>
</dbReference>
<dbReference type="NCBIfam" id="NF006830">
    <property type="entry name" value="PRK09355.1"/>
    <property type="match status" value="1"/>
</dbReference>
<dbReference type="Pfam" id="PF02110">
    <property type="entry name" value="HK"/>
    <property type="match status" value="1"/>
</dbReference>
<dbReference type="PIRSF" id="PIRSF000513">
    <property type="entry name" value="Thz_kinase"/>
    <property type="match status" value="1"/>
</dbReference>
<dbReference type="PRINTS" id="PR01099">
    <property type="entry name" value="HYETHTZKNASE"/>
</dbReference>
<dbReference type="SUPFAM" id="SSF53613">
    <property type="entry name" value="Ribokinase-like"/>
    <property type="match status" value="1"/>
</dbReference>
<gene>
    <name evidence="1" type="primary">thiM</name>
    <name type="ordered locus">SACOL2084</name>
</gene>
<comment type="function">
    <text evidence="1">Catalyzes the phosphorylation of the hydroxyl group of 4-methyl-5-beta-hydroxyethylthiazole (THZ).</text>
</comment>
<comment type="catalytic activity">
    <reaction evidence="1">
        <text>5-(2-hydroxyethyl)-4-methylthiazole + ATP = 4-methyl-5-(2-phosphooxyethyl)-thiazole + ADP + H(+)</text>
        <dbReference type="Rhea" id="RHEA:24212"/>
        <dbReference type="ChEBI" id="CHEBI:15378"/>
        <dbReference type="ChEBI" id="CHEBI:17957"/>
        <dbReference type="ChEBI" id="CHEBI:30616"/>
        <dbReference type="ChEBI" id="CHEBI:58296"/>
        <dbReference type="ChEBI" id="CHEBI:456216"/>
        <dbReference type="EC" id="2.7.1.50"/>
    </reaction>
</comment>
<comment type="cofactor">
    <cofactor evidence="1">
        <name>Mg(2+)</name>
        <dbReference type="ChEBI" id="CHEBI:18420"/>
    </cofactor>
</comment>
<comment type="pathway">
    <text evidence="1">Cofactor biosynthesis; thiamine diphosphate biosynthesis; 4-methyl-5-(2-phosphoethyl)-thiazole from 5-(2-hydroxyethyl)-4-methylthiazole: step 1/1.</text>
</comment>
<comment type="similarity">
    <text evidence="1">Belongs to the Thz kinase family.</text>
</comment>
<proteinExistence type="inferred from homology"/>
<evidence type="ECO:0000255" key="1">
    <source>
        <dbReference type="HAMAP-Rule" id="MF_00228"/>
    </source>
</evidence>
<feature type="chain" id="PRO_0000156952" description="Hydroxyethylthiazole kinase">
    <location>
        <begin position="1"/>
        <end position="263"/>
    </location>
</feature>
<feature type="binding site" evidence="1">
    <location>
        <position position="39"/>
    </location>
    <ligand>
        <name>substrate</name>
    </ligand>
</feature>
<feature type="binding site" evidence="1">
    <location>
        <position position="115"/>
    </location>
    <ligand>
        <name>ATP</name>
        <dbReference type="ChEBI" id="CHEBI:30616"/>
    </ligand>
</feature>
<feature type="binding site" evidence="1">
    <location>
        <position position="160"/>
    </location>
    <ligand>
        <name>ATP</name>
        <dbReference type="ChEBI" id="CHEBI:30616"/>
    </ligand>
</feature>
<feature type="binding site" evidence="1">
    <location>
        <position position="187"/>
    </location>
    <ligand>
        <name>substrate</name>
    </ligand>
</feature>